<protein>
    <recommendedName>
        <fullName evidence="1">Putative acetyltransferase SAOUHSC_00995</fullName>
        <ecNumber>2.3.1.-</ecNumber>
    </recommendedName>
    <alternativeName>
        <fullName evidence="1">GCN5-related N-acetyltransferase</fullName>
        <shortName evidence="1">GNAT</shortName>
    </alternativeName>
</protein>
<feature type="chain" id="PRO_0000201929" description="Putative acetyltransferase SAOUHSC_00995">
    <location>
        <begin position="1"/>
        <end position="144"/>
    </location>
</feature>
<feature type="domain" description="N-acetyltransferase" evidence="3">
    <location>
        <begin position="1"/>
        <end position="141"/>
    </location>
</feature>
<feature type="binding site" evidence="2">
    <location>
        <begin position="71"/>
        <end position="73"/>
    </location>
    <ligand>
        <name>CoA</name>
        <dbReference type="ChEBI" id="CHEBI:57287"/>
    </ligand>
</feature>
<feature type="binding site" evidence="2">
    <location>
        <position position="79"/>
    </location>
    <ligand>
        <name>CoA</name>
        <dbReference type="ChEBI" id="CHEBI:57287"/>
    </ligand>
</feature>
<feature type="binding site" evidence="2">
    <location>
        <begin position="112"/>
        <end position="114"/>
    </location>
    <ligand>
        <name>CoA</name>
        <dbReference type="ChEBI" id="CHEBI:57287"/>
    </ligand>
</feature>
<comment type="function">
    <text evidence="1">Could catalyze the transfer of an acetyl group from acetyl coenzyme A (AcCoA) to an acceptor substrate and release both CoA and the acetylated product.</text>
</comment>
<comment type="similarity">
    <text evidence="4">Belongs to the UPF0039 (ElaA) family.</text>
</comment>
<organism>
    <name type="scientific">Staphylococcus aureus (strain NCTC 8325 / PS 47)</name>
    <dbReference type="NCBI Taxonomy" id="93061"/>
    <lineage>
        <taxon>Bacteria</taxon>
        <taxon>Bacillati</taxon>
        <taxon>Bacillota</taxon>
        <taxon>Bacilli</taxon>
        <taxon>Bacillales</taxon>
        <taxon>Staphylococcaceae</taxon>
        <taxon>Staphylococcus</taxon>
    </lineage>
</organism>
<reference key="1">
    <citation type="journal article" date="1995" name="Proc. Natl. Acad. Sci. U.S.A.">
        <title>A Staphylococcus aureus autolysin that has an N-acetylmuramoyl-L-alanine amidase domain and an endo-beta-N-acetylglucosaminidase domain: cloning, sequence analysis, and characterization.</title>
        <authorList>
            <person name="Oshida T."/>
            <person name="Sugai M."/>
            <person name="Komatsuzawa H."/>
            <person name="Hong Y.-M."/>
            <person name="Suginaka H."/>
            <person name="Tomasz A."/>
        </authorList>
    </citation>
    <scope>NUCLEOTIDE SEQUENCE [GENOMIC DNA]</scope>
</reference>
<reference key="2">
    <citation type="submission" date="1995-04" db="EMBL/GenBank/DDBJ databases">
        <authorList>
            <person name="Foster S.J."/>
        </authorList>
    </citation>
    <scope>NUCLEOTIDE SEQUENCE [GENOMIC DNA]</scope>
</reference>
<reference key="3">
    <citation type="book" date="2006" name="Gram positive pathogens, 2nd edition">
        <title>The Staphylococcus aureus NCTC 8325 genome.</title>
        <editorList>
            <person name="Fischetti V."/>
            <person name="Novick R."/>
            <person name="Ferretti J."/>
            <person name="Portnoy D."/>
            <person name="Rood J."/>
        </editorList>
        <authorList>
            <person name="Gillaspy A.F."/>
            <person name="Worrell V."/>
            <person name="Orvis J."/>
            <person name="Roe B.A."/>
            <person name="Dyer D.W."/>
            <person name="Iandolo J.J."/>
        </authorList>
    </citation>
    <scope>NUCLEOTIDE SEQUENCE [LARGE SCALE GENOMIC DNA]</scope>
    <source>
        <strain>NCTC 8325 / PS 47</strain>
    </source>
</reference>
<dbReference type="EC" id="2.3.1.-"/>
<dbReference type="EMBL" id="D17366">
    <property type="protein sequence ID" value="BAA04184.1"/>
    <property type="molecule type" value="Genomic_DNA"/>
</dbReference>
<dbReference type="EMBL" id="L41499">
    <property type="protein sequence ID" value="AAA99981.1"/>
    <property type="molecule type" value="Genomic_DNA"/>
</dbReference>
<dbReference type="EMBL" id="CP000253">
    <property type="protein sequence ID" value="ABD30119.1"/>
    <property type="molecule type" value="Genomic_DNA"/>
</dbReference>
<dbReference type="RefSeq" id="WP_000491986.1">
    <property type="nucleotide sequence ID" value="NZ_LS483365.1"/>
</dbReference>
<dbReference type="RefSeq" id="YP_499547.1">
    <property type="nucleotide sequence ID" value="NC_007795.1"/>
</dbReference>
<dbReference type="SMR" id="P0A0M9"/>
<dbReference type="STRING" id="93061.SAOUHSC_00995"/>
<dbReference type="PaxDb" id="1280-SAXN108_1051"/>
<dbReference type="GeneID" id="3920395"/>
<dbReference type="KEGG" id="sao:SAOUHSC_00995"/>
<dbReference type="PATRIC" id="fig|93061.5.peg.913"/>
<dbReference type="eggNOG" id="COG2153">
    <property type="taxonomic scope" value="Bacteria"/>
</dbReference>
<dbReference type="HOGENOM" id="CLU_056607_6_2_9"/>
<dbReference type="OrthoDB" id="9796171at2"/>
<dbReference type="PRO" id="PR:P0A0M9"/>
<dbReference type="Proteomes" id="UP000008816">
    <property type="component" value="Chromosome"/>
</dbReference>
<dbReference type="GO" id="GO:0016747">
    <property type="term" value="F:acyltransferase activity, transferring groups other than amino-acyl groups"/>
    <property type="evidence" value="ECO:0000250"/>
    <property type="project" value="UniProtKB"/>
</dbReference>
<dbReference type="GO" id="GO:0008080">
    <property type="term" value="F:N-acetyltransferase activity"/>
    <property type="evidence" value="ECO:0000318"/>
    <property type="project" value="GO_Central"/>
</dbReference>
<dbReference type="CDD" id="cd04301">
    <property type="entry name" value="NAT_SF"/>
    <property type="match status" value="1"/>
</dbReference>
<dbReference type="FunFam" id="3.40.630.30:FF:000131">
    <property type="entry name" value="Acetyltransferase, GNAT family"/>
    <property type="match status" value="1"/>
</dbReference>
<dbReference type="Gene3D" id="3.40.630.30">
    <property type="match status" value="1"/>
</dbReference>
<dbReference type="InterPro" id="IPR016181">
    <property type="entry name" value="Acyl_CoA_acyltransferase"/>
</dbReference>
<dbReference type="InterPro" id="IPR000182">
    <property type="entry name" value="GNAT_dom"/>
</dbReference>
<dbReference type="InterPro" id="IPR039143">
    <property type="entry name" value="GNPNAT1-like"/>
</dbReference>
<dbReference type="PANTHER" id="PTHR13355">
    <property type="entry name" value="GLUCOSAMINE 6-PHOSPHATE N-ACETYLTRANSFERASE"/>
    <property type="match status" value="1"/>
</dbReference>
<dbReference type="PANTHER" id="PTHR13355:SF11">
    <property type="entry name" value="GLUCOSAMINE 6-PHOSPHATE N-ACETYLTRANSFERASE"/>
    <property type="match status" value="1"/>
</dbReference>
<dbReference type="Pfam" id="PF00583">
    <property type="entry name" value="Acetyltransf_1"/>
    <property type="match status" value="1"/>
</dbReference>
<dbReference type="SUPFAM" id="SSF55729">
    <property type="entry name" value="Acyl-CoA N-acyltransferases (Nat)"/>
    <property type="match status" value="1"/>
</dbReference>
<dbReference type="PROSITE" id="PS51186">
    <property type="entry name" value="GNAT"/>
    <property type="match status" value="1"/>
</dbReference>
<gene>
    <name type="ordered locus">SAOUHSC_00995</name>
</gene>
<proteinExistence type="inferred from homology"/>
<sequence>MFSKVNNQKMLEDCFYIRKKVFVEEQGVPEESEIDEYESESIHLIGYDNGQPVATARIRPINETTVKIERVAVMKSHRGQGMGRMLMQAVESLAKDEGFYVATMNAQCHAIPFYESLNFKMRGNIFLEEGIEHIEMTKKLTSLN</sequence>
<keyword id="KW-0012">Acyltransferase</keyword>
<keyword id="KW-1185">Reference proteome</keyword>
<keyword id="KW-0808">Transferase</keyword>
<name>ATSE_STAA8</name>
<accession>P0A0M9</accession>
<accession>P52080</accession>
<accession>Q2FZK6</accession>
<evidence type="ECO:0000250" key="1">
    <source>
        <dbReference type="UniProtKB" id="Q5HH30"/>
    </source>
</evidence>
<evidence type="ECO:0000250" key="2">
    <source>
        <dbReference type="UniProtKB" id="Q9I0Q8"/>
    </source>
</evidence>
<evidence type="ECO:0000255" key="3">
    <source>
        <dbReference type="PROSITE-ProRule" id="PRU00532"/>
    </source>
</evidence>
<evidence type="ECO:0000305" key="4"/>